<sequence>MATVSMRDMLKAGVHFGHQTRYWNPKMKPFIFGARNKVHIINLEKTVPMFNEALAELNKIVSRKGKILFVGTKRAASEAVKDAALSCDQFFVNHRWLGGMLTNWKTVRQSIKRLKDLETQSQDGTFDKLTKKEALMRTRELEKLENSLGGIKDMGGLPDALFVIDADHEHIAIKEANNLGIPVFAIVDTNSDPDGVDFVIPGNDDAIRAVTLYLGAVAATVREGRSQDLASQAEESFVEAE</sequence>
<accession>Q0T840</accession>
<keyword id="KW-0687">Ribonucleoprotein</keyword>
<keyword id="KW-0689">Ribosomal protein</keyword>
<gene>
    <name evidence="1" type="primary">rpsB</name>
    <name type="ordered locus">SFV_0152</name>
</gene>
<comment type="similarity">
    <text evidence="1">Belongs to the universal ribosomal protein uS2 family.</text>
</comment>
<comment type="sequence caution" evidence="2">
    <conflict type="erroneous initiation">
        <sequence resource="EMBL-CDS" id="ABF02436"/>
    </conflict>
</comment>
<evidence type="ECO:0000255" key="1">
    <source>
        <dbReference type="HAMAP-Rule" id="MF_00291"/>
    </source>
</evidence>
<evidence type="ECO:0000305" key="2"/>
<name>RS2_SHIF8</name>
<dbReference type="EMBL" id="CP000266">
    <property type="protein sequence ID" value="ABF02436.1"/>
    <property type="status" value="ALT_INIT"/>
    <property type="molecule type" value="Genomic_DNA"/>
</dbReference>
<dbReference type="RefSeq" id="WP_000246888.1">
    <property type="nucleotide sequence ID" value="NC_008258.1"/>
</dbReference>
<dbReference type="SMR" id="Q0T840"/>
<dbReference type="KEGG" id="sfv:SFV_0152"/>
<dbReference type="HOGENOM" id="CLU_040318_1_0_6"/>
<dbReference type="Proteomes" id="UP000000659">
    <property type="component" value="Chromosome"/>
</dbReference>
<dbReference type="GO" id="GO:0022627">
    <property type="term" value="C:cytosolic small ribosomal subunit"/>
    <property type="evidence" value="ECO:0007669"/>
    <property type="project" value="TreeGrafter"/>
</dbReference>
<dbReference type="GO" id="GO:0003735">
    <property type="term" value="F:structural constituent of ribosome"/>
    <property type="evidence" value="ECO:0007669"/>
    <property type="project" value="InterPro"/>
</dbReference>
<dbReference type="GO" id="GO:0006412">
    <property type="term" value="P:translation"/>
    <property type="evidence" value="ECO:0007669"/>
    <property type="project" value="UniProtKB-UniRule"/>
</dbReference>
<dbReference type="CDD" id="cd01425">
    <property type="entry name" value="RPS2"/>
    <property type="match status" value="1"/>
</dbReference>
<dbReference type="FunFam" id="1.10.287.610:FF:000001">
    <property type="entry name" value="30S ribosomal protein S2"/>
    <property type="match status" value="1"/>
</dbReference>
<dbReference type="Gene3D" id="3.40.50.10490">
    <property type="entry name" value="Glucose-6-phosphate isomerase like protein, domain 1"/>
    <property type="match status" value="1"/>
</dbReference>
<dbReference type="Gene3D" id="1.10.287.610">
    <property type="entry name" value="Helix hairpin bin"/>
    <property type="match status" value="1"/>
</dbReference>
<dbReference type="HAMAP" id="MF_00291_B">
    <property type="entry name" value="Ribosomal_uS2_B"/>
    <property type="match status" value="1"/>
</dbReference>
<dbReference type="InterPro" id="IPR001865">
    <property type="entry name" value="Ribosomal_uS2"/>
</dbReference>
<dbReference type="InterPro" id="IPR005706">
    <property type="entry name" value="Ribosomal_uS2_bac/mit/plastid"/>
</dbReference>
<dbReference type="InterPro" id="IPR018130">
    <property type="entry name" value="Ribosomal_uS2_CS"/>
</dbReference>
<dbReference type="InterPro" id="IPR023591">
    <property type="entry name" value="Ribosomal_uS2_flav_dom_sf"/>
</dbReference>
<dbReference type="NCBIfam" id="TIGR01011">
    <property type="entry name" value="rpsB_bact"/>
    <property type="match status" value="1"/>
</dbReference>
<dbReference type="PANTHER" id="PTHR12534">
    <property type="entry name" value="30S RIBOSOMAL PROTEIN S2 PROKARYOTIC AND ORGANELLAR"/>
    <property type="match status" value="1"/>
</dbReference>
<dbReference type="PANTHER" id="PTHR12534:SF0">
    <property type="entry name" value="SMALL RIBOSOMAL SUBUNIT PROTEIN US2M"/>
    <property type="match status" value="1"/>
</dbReference>
<dbReference type="Pfam" id="PF00318">
    <property type="entry name" value="Ribosomal_S2"/>
    <property type="match status" value="1"/>
</dbReference>
<dbReference type="PRINTS" id="PR00395">
    <property type="entry name" value="RIBOSOMALS2"/>
</dbReference>
<dbReference type="SUPFAM" id="SSF52313">
    <property type="entry name" value="Ribosomal protein S2"/>
    <property type="match status" value="1"/>
</dbReference>
<dbReference type="PROSITE" id="PS00962">
    <property type="entry name" value="RIBOSOMAL_S2_1"/>
    <property type="match status" value="1"/>
</dbReference>
<dbReference type="PROSITE" id="PS00963">
    <property type="entry name" value="RIBOSOMAL_S2_2"/>
    <property type="match status" value="1"/>
</dbReference>
<feature type="chain" id="PRO_0000352037" description="Small ribosomal subunit protein uS2">
    <location>
        <begin position="1"/>
        <end position="241"/>
    </location>
</feature>
<proteinExistence type="inferred from homology"/>
<reference key="1">
    <citation type="journal article" date="2006" name="BMC Genomics">
        <title>Complete genome sequence of Shigella flexneri 5b and comparison with Shigella flexneri 2a.</title>
        <authorList>
            <person name="Nie H."/>
            <person name="Yang F."/>
            <person name="Zhang X."/>
            <person name="Yang J."/>
            <person name="Chen L."/>
            <person name="Wang J."/>
            <person name="Xiong Z."/>
            <person name="Peng J."/>
            <person name="Sun L."/>
            <person name="Dong J."/>
            <person name="Xue Y."/>
            <person name="Xu X."/>
            <person name="Chen S."/>
            <person name="Yao Z."/>
            <person name="Shen Y."/>
            <person name="Jin Q."/>
        </authorList>
    </citation>
    <scope>NUCLEOTIDE SEQUENCE [LARGE SCALE GENOMIC DNA]</scope>
    <source>
        <strain>8401</strain>
    </source>
</reference>
<protein>
    <recommendedName>
        <fullName evidence="1">Small ribosomal subunit protein uS2</fullName>
    </recommendedName>
    <alternativeName>
        <fullName evidence="2">30S ribosomal protein S2</fullName>
    </alternativeName>
</protein>
<organism>
    <name type="scientific">Shigella flexneri serotype 5b (strain 8401)</name>
    <dbReference type="NCBI Taxonomy" id="373384"/>
    <lineage>
        <taxon>Bacteria</taxon>
        <taxon>Pseudomonadati</taxon>
        <taxon>Pseudomonadota</taxon>
        <taxon>Gammaproteobacteria</taxon>
        <taxon>Enterobacterales</taxon>
        <taxon>Enterobacteriaceae</taxon>
        <taxon>Shigella</taxon>
    </lineage>
</organism>